<feature type="chain" id="PRO_0000209198" description="Protein SlyX homolog">
    <location>
        <begin position="1"/>
        <end position="68"/>
    </location>
</feature>
<proteinExistence type="inferred from homology"/>
<accession>Q8FUZ1</accession>
<accession>G0KE74</accession>
<gene>
    <name evidence="1" type="primary">slyX</name>
    <name type="ordered locus">BRA1068</name>
    <name type="ordered locus">BS1330_II1060</name>
</gene>
<comment type="similarity">
    <text evidence="1">Belongs to the SlyX family.</text>
</comment>
<comment type="sequence caution" evidence="2">
    <conflict type="erroneous initiation">
        <sequence resource="EMBL-CDS" id="AAN34235"/>
    </conflict>
</comment>
<name>SLYX_BRUSU</name>
<evidence type="ECO:0000255" key="1">
    <source>
        <dbReference type="HAMAP-Rule" id="MF_00715"/>
    </source>
</evidence>
<evidence type="ECO:0000305" key="2"/>
<sequence length="68" mass="7873">MSAEERLIELEIRVAEQEKTIDELSSVLTEQWKTVDQLSKKLNALTNRFLELEEQAAPDVPVTKPPHW</sequence>
<protein>
    <recommendedName>
        <fullName evidence="1">Protein SlyX homolog</fullName>
    </recommendedName>
</protein>
<organism>
    <name type="scientific">Brucella suis biovar 1 (strain 1330)</name>
    <dbReference type="NCBI Taxonomy" id="204722"/>
    <lineage>
        <taxon>Bacteria</taxon>
        <taxon>Pseudomonadati</taxon>
        <taxon>Pseudomonadota</taxon>
        <taxon>Alphaproteobacteria</taxon>
        <taxon>Hyphomicrobiales</taxon>
        <taxon>Brucellaceae</taxon>
        <taxon>Brucella/Ochrobactrum group</taxon>
        <taxon>Brucella</taxon>
    </lineage>
</organism>
<reference key="1">
    <citation type="journal article" date="2002" name="Proc. Natl. Acad. Sci. U.S.A.">
        <title>The Brucella suis genome reveals fundamental similarities between animal and plant pathogens and symbionts.</title>
        <authorList>
            <person name="Paulsen I.T."/>
            <person name="Seshadri R."/>
            <person name="Nelson K.E."/>
            <person name="Eisen J.A."/>
            <person name="Heidelberg J.F."/>
            <person name="Read T.D."/>
            <person name="Dodson R.J."/>
            <person name="Umayam L.A."/>
            <person name="Brinkac L.M."/>
            <person name="Beanan M.J."/>
            <person name="Daugherty S.C."/>
            <person name="DeBoy R.T."/>
            <person name="Durkin A.S."/>
            <person name="Kolonay J.F."/>
            <person name="Madupu R."/>
            <person name="Nelson W.C."/>
            <person name="Ayodeji B."/>
            <person name="Kraul M."/>
            <person name="Shetty J."/>
            <person name="Malek J.A."/>
            <person name="Van Aken S.E."/>
            <person name="Riedmuller S."/>
            <person name="Tettelin H."/>
            <person name="Gill S.R."/>
            <person name="White O."/>
            <person name="Salzberg S.L."/>
            <person name="Hoover D.L."/>
            <person name="Lindler L.E."/>
            <person name="Halling S.M."/>
            <person name="Boyle S.M."/>
            <person name="Fraser C.M."/>
        </authorList>
    </citation>
    <scope>NUCLEOTIDE SEQUENCE [LARGE SCALE GENOMIC DNA]</scope>
    <source>
        <strain>1330</strain>
    </source>
</reference>
<reference key="2">
    <citation type="journal article" date="2011" name="J. Bacteriol.">
        <title>Revised genome sequence of Brucella suis 1330.</title>
        <authorList>
            <person name="Tae H."/>
            <person name="Shallom S."/>
            <person name="Settlage R."/>
            <person name="Preston D."/>
            <person name="Adams L.G."/>
            <person name="Garner H.R."/>
        </authorList>
    </citation>
    <scope>NUCLEOTIDE SEQUENCE [LARGE SCALE GENOMIC DNA]</scope>
    <source>
        <strain>1330</strain>
    </source>
</reference>
<dbReference type="EMBL" id="AE014292">
    <property type="protein sequence ID" value="AAN34235.1"/>
    <property type="status" value="ALT_INIT"/>
    <property type="molecule type" value="Genomic_DNA"/>
</dbReference>
<dbReference type="EMBL" id="CP002998">
    <property type="protein sequence ID" value="AEM20512.1"/>
    <property type="molecule type" value="Genomic_DNA"/>
</dbReference>
<dbReference type="RefSeq" id="WP_002965586.1">
    <property type="nucleotide sequence ID" value="NZ_KN046805.1"/>
</dbReference>
<dbReference type="SMR" id="Q8FUZ1"/>
<dbReference type="KEGG" id="bms:BRA1068"/>
<dbReference type="KEGG" id="bsi:BS1330_II1060"/>
<dbReference type="PATRIC" id="fig|204722.21.peg.1051"/>
<dbReference type="HOGENOM" id="CLU_180796_5_0_5"/>
<dbReference type="Proteomes" id="UP000007104">
    <property type="component" value="Chromosome II"/>
</dbReference>
<dbReference type="Gene3D" id="1.20.5.300">
    <property type="match status" value="1"/>
</dbReference>
<dbReference type="HAMAP" id="MF_00715">
    <property type="entry name" value="SlyX"/>
    <property type="match status" value="1"/>
</dbReference>
<dbReference type="InterPro" id="IPR007236">
    <property type="entry name" value="SlyX"/>
</dbReference>
<dbReference type="NCBIfam" id="NF001962">
    <property type="entry name" value="PRK00736.1"/>
    <property type="match status" value="1"/>
</dbReference>
<dbReference type="PANTHER" id="PTHR36508">
    <property type="entry name" value="PROTEIN SLYX"/>
    <property type="match status" value="1"/>
</dbReference>
<dbReference type="PANTHER" id="PTHR36508:SF1">
    <property type="entry name" value="PROTEIN SLYX"/>
    <property type="match status" value="1"/>
</dbReference>
<dbReference type="Pfam" id="PF04102">
    <property type="entry name" value="SlyX"/>
    <property type="match status" value="1"/>
</dbReference>